<keyword id="KW-0067">ATP-binding</keyword>
<keyword id="KW-0997">Cell inner membrane</keyword>
<keyword id="KW-1003">Cell membrane</keyword>
<keyword id="KW-0418">Kinase</keyword>
<keyword id="KW-0472">Membrane</keyword>
<keyword id="KW-0547">Nucleotide-binding</keyword>
<keyword id="KW-0808">Transferase</keyword>
<keyword id="KW-0812">Transmembrane</keyword>
<keyword id="KW-1133">Transmembrane helix</keyword>
<keyword id="KW-0831">Ubiquinone biosynthesis</keyword>
<evidence type="ECO:0000255" key="1">
    <source>
        <dbReference type="HAMAP-Rule" id="MF_00414"/>
    </source>
</evidence>
<reference key="1">
    <citation type="journal article" date="2005" name="Jpn. Agric. Res. Q.">
        <title>Genome sequence of Xanthomonas oryzae pv. oryzae suggests contribution of large numbers of effector genes and insertion sequences to its race diversity.</title>
        <authorList>
            <person name="Ochiai H."/>
            <person name="Inoue Y."/>
            <person name="Takeya M."/>
            <person name="Sasaki A."/>
            <person name="Kaku H."/>
        </authorList>
    </citation>
    <scope>NUCLEOTIDE SEQUENCE [LARGE SCALE GENOMIC DNA]</scope>
    <source>
        <strain>MAFF 311018</strain>
    </source>
</reference>
<organism>
    <name type="scientific">Xanthomonas oryzae pv. oryzae (strain MAFF 311018)</name>
    <dbReference type="NCBI Taxonomy" id="342109"/>
    <lineage>
        <taxon>Bacteria</taxon>
        <taxon>Pseudomonadati</taxon>
        <taxon>Pseudomonadota</taxon>
        <taxon>Gammaproteobacteria</taxon>
        <taxon>Lysobacterales</taxon>
        <taxon>Lysobacteraceae</taxon>
        <taxon>Xanthomonas</taxon>
    </lineage>
</organism>
<accession>Q2P8Q0</accession>
<sequence>MKAILRASRIGRVILRYRLDALLEGTPAERWLRLAKPFVPRASAEIAVQSRGARLRLALQELGPIFVKFGQILSTRRDLIPADVAEELTLLQDRVKPFDGEAARLIVERALGLPVSVAFASFDTVPLASASIAQVHAATLPPDANGVRREVVVKVLRPEIERQIDADIALLHSLATLVERTHPRADKIRPREVVAEIEGTLSAELDLQREGANASVLRRFWEGSDDLYVPEVIWSHTAERALTLERVYGIPSDDIAKLDAAGIDRKALAAKGVRVFYTQVFRDNFFHADAHAGNIWVDSDPERRLNPRFIALDFGIMGQLSQEDQYYLAENFMAIFHKDYRRMAELHVEAGWMPSNVRIDELEAAARSVCEPYFTRPLSEISLAQVLIKLFRVAQRYELTLQPQLILLQKTLLNIEGVGRQLDPKLDIWAVARPVLERILRERYSPRRVLRELSKRLPEIMTHAPDMPRLVHSWLKQQVEGRHQIDIRSTELLALDLSLRKLQTRVVTAITGSGLLVVAAVLYGLHPDGWYLGTVPVWSWISGGAGSAALLVAWLRR</sequence>
<name>UBIB_XANOM</name>
<dbReference type="EC" id="2.7.-.-" evidence="1"/>
<dbReference type="EMBL" id="AP008229">
    <property type="protein sequence ID" value="BAE67077.1"/>
    <property type="molecule type" value="Genomic_DNA"/>
</dbReference>
<dbReference type="RefSeq" id="WP_011257293.1">
    <property type="nucleotide sequence ID" value="NC_007705.1"/>
</dbReference>
<dbReference type="SMR" id="Q2P8Q0"/>
<dbReference type="KEGG" id="xom:XOO0322"/>
<dbReference type="HOGENOM" id="CLU_006533_0_0_6"/>
<dbReference type="UniPathway" id="UPA00232"/>
<dbReference type="GO" id="GO:0005886">
    <property type="term" value="C:plasma membrane"/>
    <property type="evidence" value="ECO:0007669"/>
    <property type="project" value="UniProtKB-SubCell"/>
</dbReference>
<dbReference type="GO" id="GO:0005524">
    <property type="term" value="F:ATP binding"/>
    <property type="evidence" value="ECO:0007669"/>
    <property type="project" value="UniProtKB-KW"/>
</dbReference>
<dbReference type="GO" id="GO:0004672">
    <property type="term" value="F:protein kinase activity"/>
    <property type="evidence" value="ECO:0007669"/>
    <property type="project" value="UniProtKB-UniRule"/>
</dbReference>
<dbReference type="GO" id="GO:0010795">
    <property type="term" value="P:regulation of ubiquinone biosynthetic process"/>
    <property type="evidence" value="ECO:0007669"/>
    <property type="project" value="UniProtKB-UniRule"/>
</dbReference>
<dbReference type="GO" id="GO:0006744">
    <property type="term" value="P:ubiquinone biosynthetic process"/>
    <property type="evidence" value="ECO:0007669"/>
    <property type="project" value="UniProtKB-UniPathway"/>
</dbReference>
<dbReference type="CDD" id="cd13972">
    <property type="entry name" value="UbiB"/>
    <property type="match status" value="1"/>
</dbReference>
<dbReference type="HAMAP" id="MF_00414">
    <property type="entry name" value="UbiB"/>
    <property type="match status" value="1"/>
</dbReference>
<dbReference type="InterPro" id="IPR004147">
    <property type="entry name" value="ABC1_dom"/>
</dbReference>
<dbReference type="InterPro" id="IPR011009">
    <property type="entry name" value="Kinase-like_dom_sf"/>
</dbReference>
<dbReference type="InterPro" id="IPR010232">
    <property type="entry name" value="UbiB"/>
</dbReference>
<dbReference type="InterPro" id="IPR045308">
    <property type="entry name" value="UbiB_bact"/>
</dbReference>
<dbReference type="InterPro" id="IPR050154">
    <property type="entry name" value="UbiB_kinase"/>
</dbReference>
<dbReference type="NCBIfam" id="NF003404">
    <property type="entry name" value="PRK04750.1"/>
    <property type="match status" value="1"/>
</dbReference>
<dbReference type="NCBIfam" id="TIGR01982">
    <property type="entry name" value="UbiB"/>
    <property type="match status" value="1"/>
</dbReference>
<dbReference type="PANTHER" id="PTHR10566">
    <property type="entry name" value="CHAPERONE-ACTIVITY OF BC1 COMPLEX CABC1 -RELATED"/>
    <property type="match status" value="1"/>
</dbReference>
<dbReference type="PANTHER" id="PTHR10566:SF113">
    <property type="entry name" value="PROTEIN ACTIVITY OF BC1 COMPLEX KINASE 7, CHLOROPLASTIC"/>
    <property type="match status" value="1"/>
</dbReference>
<dbReference type="Pfam" id="PF03109">
    <property type="entry name" value="ABC1"/>
    <property type="match status" value="1"/>
</dbReference>
<dbReference type="SUPFAM" id="SSF56112">
    <property type="entry name" value="Protein kinase-like (PK-like)"/>
    <property type="match status" value="1"/>
</dbReference>
<feature type="chain" id="PRO_1000050073" description="Probable protein kinase UbiB">
    <location>
        <begin position="1"/>
        <end position="557"/>
    </location>
</feature>
<feature type="transmembrane region" description="Helical" evidence="1">
    <location>
        <begin position="506"/>
        <end position="526"/>
    </location>
</feature>
<feature type="transmembrane region" description="Helical" evidence="1">
    <location>
        <begin position="535"/>
        <end position="555"/>
    </location>
</feature>
<feature type="domain" description="Protein kinase" evidence="1">
    <location>
        <begin position="121"/>
        <end position="509"/>
    </location>
</feature>
<feature type="active site" description="Proton acceptor" evidence="1">
    <location>
        <position position="289"/>
    </location>
</feature>
<feature type="binding site" evidence="1">
    <location>
        <begin position="127"/>
        <end position="135"/>
    </location>
    <ligand>
        <name>ATP</name>
        <dbReference type="ChEBI" id="CHEBI:30616"/>
    </ligand>
</feature>
<feature type="binding site" evidence="1">
    <location>
        <position position="154"/>
    </location>
    <ligand>
        <name>ATP</name>
        <dbReference type="ChEBI" id="CHEBI:30616"/>
    </ligand>
</feature>
<comment type="function">
    <text evidence="1">Is probably a protein kinase regulator of UbiI activity which is involved in aerobic coenzyme Q (ubiquinone) biosynthesis.</text>
</comment>
<comment type="pathway">
    <text>Cofactor biosynthesis; ubiquinone biosynthesis [regulation].</text>
</comment>
<comment type="subcellular location">
    <subcellularLocation>
        <location evidence="1">Cell inner membrane</location>
        <topology evidence="1">Multi-pass membrane protein</topology>
    </subcellularLocation>
</comment>
<comment type="similarity">
    <text evidence="1">Belongs to the ABC1 family. UbiB subfamily.</text>
</comment>
<gene>
    <name evidence="1" type="primary">ubiB</name>
    <name type="ordered locus">XOO0322</name>
</gene>
<protein>
    <recommendedName>
        <fullName evidence="1">Probable protein kinase UbiB</fullName>
        <ecNumber evidence="1">2.7.-.-</ecNumber>
    </recommendedName>
    <alternativeName>
        <fullName evidence="1">Ubiquinone biosynthesis protein UbiB</fullName>
    </alternativeName>
</protein>
<proteinExistence type="inferred from homology"/>